<name>HISZ_NITEU</name>
<feature type="chain" id="PRO_0000171047" description="ATP phosphoribosyltransferase regulatory subunit">
    <location>
        <begin position="1"/>
        <end position="391"/>
    </location>
</feature>
<organism>
    <name type="scientific">Nitrosomonas europaea (strain ATCC 19718 / CIP 103999 / KCTC 2705 / NBRC 14298)</name>
    <dbReference type="NCBI Taxonomy" id="228410"/>
    <lineage>
        <taxon>Bacteria</taxon>
        <taxon>Pseudomonadati</taxon>
        <taxon>Pseudomonadota</taxon>
        <taxon>Betaproteobacteria</taxon>
        <taxon>Nitrosomonadales</taxon>
        <taxon>Nitrosomonadaceae</taxon>
        <taxon>Nitrosomonas</taxon>
    </lineage>
</organism>
<dbReference type="EMBL" id="AL954747">
    <property type="protein sequence ID" value="CAD85193.1"/>
    <property type="molecule type" value="Genomic_DNA"/>
</dbReference>
<dbReference type="RefSeq" id="WP_011111860.1">
    <property type="nucleotide sequence ID" value="NC_004757.1"/>
</dbReference>
<dbReference type="SMR" id="Q82V28"/>
<dbReference type="STRING" id="228410.NE1282"/>
<dbReference type="DNASU" id="1082226"/>
<dbReference type="GeneID" id="87104457"/>
<dbReference type="KEGG" id="neu:NE1282"/>
<dbReference type="eggNOG" id="COG3705">
    <property type="taxonomic scope" value="Bacteria"/>
</dbReference>
<dbReference type="HOGENOM" id="CLU_025113_0_1_4"/>
<dbReference type="OrthoDB" id="9769617at2"/>
<dbReference type="PhylomeDB" id="Q82V28"/>
<dbReference type="UniPathway" id="UPA00031">
    <property type="reaction ID" value="UER00006"/>
</dbReference>
<dbReference type="Proteomes" id="UP000001416">
    <property type="component" value="Chromosome"/>
</dbReference>
<dbReference type="GO" id="GO:0005737">
    <property type="term" value="C:cytoplasm"/>
    <property type="evidence" value="ECO:0007669"/>
    <property type="project" value="UniProtKB-SubCell"/>
</dbReference>
<dbReference type="GO" id="GO:0000105">
    <property type="term" value="P:L-histidine biosynthetic process"/>
    <property type="evidence" value="ECO:0007669"/>
    <property type="project" value="UniProtKB-UniRule"/>
</dbReference>
<dbReference type="CDD" id="cd00773">
    <property type="entry name" value="HisRS-like_core"/>
    <property type="match status" value="1"/>
</dbReference>
<dbReference type="Gene3D" id="3.30.930.10">
    <property type="entry name" value="Bira Bifunctional Protein, Domain 2"/>
    <property type="match status" value="1"/>
</dbReference>
<dbReference type="HAMAP" id="MF_00125">
    <property type="entry name" value="HisZ"/>
    <property type="match status" value="1"/>
</dbReference>
<dbReference type="InterPro" id="IPR045864">
    <property type="entry name" value="aa-tRNA-synth_II/BPL/LPL"/>
</dbReference>
<dbReference type="InterPro" id="IPR041715">
    <property type="entry name" value="HisRS-like_core"/>
</dbReference>
<dbReference type="InterPro" id="IPR004516">
    <property type="entry name" value="HisRS/HisZ"/>
</dbReference>
<dbReference type="InterPro" id="IPR004517">
    <property type="entry name" value="HisZ"/>
</dbReference>
<dbReference type="NCBIfam" id="TIGR00443">
    <property type="entry name" value="hisZ_biosyn_reg"/>
    <property type="match status" value="1"/>
</dbReference>
<dbReference type="NCBIfam" id="NF008935">
    <property type="entry name" value="PRK12292.1-1"/>
    <property type="match status" value="1"/>
</dbReference>
<dbReference type="NCBIfam" id="NF009086">
    <property type="entry name" value="PRK12421.1"/>
    <property type="match status" value="1"/>
</dbReference>
<dbReference type="PANTHER" id="PTHR11476:SF7">
    <property type="entry name" value="HISTIDINE--TRNA LIGASE"/>
    <property type="match status" value="1"/>
</dbReference>
<dbReference type="PANTHER" id="PTHR11476">
    <property type="entry name" value="HISTIDYL-TRNA SYNTHETASE"/>
    <property type="match status" value="1"/>
</dbReference>
<dbReference type="Pfam" id="PF13393">
    <property type="entry name" value="tRNA-synt_His"/>
    <property type="match status" value="1"/>
</dbReference>
<dbReference type="PIRSF" id="PIRSF001549">
    <property type="entry name" value="His-tRNA_synth"/>
    <property type="match status" value="1"/>
</dbReference>
<dbReference type="SUPFAM" id="SSF55681">
    <property type="entry name" value="Class II aaRS and biotin synthetases"/>
    <property type="match status" value="1"/>
</dbReference>
<comment type="function">
    <text evidence="1">Required for the first step of histidine biosynthesis. May allow the feedback regulation of ATP phosphoribosyltransferase activity by histidine.</text>
</comment>
<comment type="pathway">
    <text evidence="1">Amino-acid biosynthesis; L-histidine biosynthesis; L-histidine from 5-phospho-alpha-D-ribose 1-diphosphate: step 1/9.</text>
</comment>
<comment type="subunit">
    <text evidence="1">Heteromultimer composed of HisG and HisZ subunits.</text>
</comment>
<comment type="subcellular location">
    <subcellularLocation>
        <location evidence="1">Cytoplasm</location>
    </subcellularLocation>
</comment>
<comment type="miscellaneous">
    <text>This function is generally fulfilled by the C-terminal part of HisG, which is missing in some bacteria such as this one.</text>
</comment>
<comment type="similarity">
    <text evidence="1">Belongs to the class-II aminoacyl-tRNA synthetase family. HisZ subfamily.</text>
</comment>
<sequence>MRNWLLPEYIEDVLPRDAYRIEKIRRLIMDMLFAHGYQFVMPPLLEYVESLLAGSGSGMNLRMFKVVDQLSGRMMGLRADMTPQAARIDAHLLNISGVTRLCYASSVVHTVPDEITRTREPFQVGAELYGHSGIESDLEIQCLLLECLSVSGIHSIHLDLGHIRVFRSLIRDSGIKPEFEMELYAALWAKDISSLKELVRTGLNKRLTRSVQNALLLLPELYGDGTVLLSARQHLPDFPEIGEALDQLEHVARILQPYVDRITFDLADLRGYHYHTGMVFAVYTPGCPAPIALGGRYDEIGKSFGRARPATGFSLDLKQLSQLTDMNGYPSGILAPWKPEDEKLAAMVRQLRAEGHIVVTELPGEENQEVTGCDRKLVFRNGNWEIDPVTG</sequence>
<proteinExistence type="inferred from homology"/>
<evidence type="ECO:0000255" key="1">
    <source>
        <dbReference type="HAMAP-Rule" id="MF_00125"/>
    </source>
</evidence>
<reference key="1">
    <citation type="journal article" date="2003" name="J. Bacteriol.">
        <title>Complete genome sequence of the ammonia-oxidizing bacterium and obligate chemolithoautotroph Nitrosomonas europaea.</title>
        <authorList>
            <person name="Chain P."/>
            <person name="Lamerdin J.E."/>
            <person name="Larimer F.W."/>
            <person name="Regala W."/>
            <person name="Lao V."/>
            <person name="Land M.L."/>
            <person name="Hauser L."/>
            <person name="Hooper A.B."/>
            <person name="Klotz M.G."/>
            <person name="Norton J."/>
            <person name="Sayavedra-Soto L.A."/>
            <person name="Arciero D.M."/>
            <person name="Hommes N.G."/>
            <person name="Whittaker M.M."/>
            <person name="Arp D.J."/>
        </authorList>
    </citation>
    <scope>NUCLEOTIDE SEQUENCE [LARGE SCALE GENOMIC DNA]</scope>
    <source>
        <strain>ATCC 19718 / CIP 103999 / KCTC 2705 / NBRC 14298</strain>
    </source>
</reference>
<accession>Q82V28</accession>
<keyword id="KW-0028">Amino-acid biosynthesis</keyword>
<keyword id="KW-0963">Cytoplasm</keyword>
<keyword id="KW-0368">Histidine biosynthesis</keyword>
<keyword id="KW-1185">Reference proteome</keyword>
<gene>
    <name evidence="1" type="primary">hisZ</name>
    <name type="ordered locus">NE1282</name>
</gene>
<protein>
    <recommendedName>
        <fullName evidence="1">ATP phosphoribosyltransferase regulatory subunit</fullName>
    </recommendedName>
</protein>